<feature type="chain" id="PRO_0000296105" description="Cyclin-dependent kinase F-1">
    <location>
        <begin position="1"/>
        <end position="479"/>
    </location>
</feature>
<feature type="domain" description="Protein kinase" evidence="2">
    <location>
        <begin position="24"/>
        <end position="419"/>
    </location>
</feature>
<feature type="region of interest" description="Disordered" evidence="4">
    <location>
        <begin position="429"/>
        <end position="479"/>
    </location>
</feature>
<feature type="compositionally biased region" description="Basic and acidic residues" evidence="4">
    <location>
        <begin position="468"/>
        <end position="479"/>
    </location>
</feature>
<feature type="active site" description="Proton acceptor" evidence="2 3">
    <location>
        <position position="146"/>
    </location>
</feature>
<feature type="binding site" evidence="2">
    <location>
        <begin position="30"/>
        <end position="38"/>
    </location>
    <ligand>
        <name>ATP</name>
        <dbReference type="ChEBI" id="CHEBI:30616"/>
    </ligand>
</feature>
<feature type="binding site" evidence="2">
    <location>
        <position position="53"/>
    </location>
    <ligand>
        <name>ATP</name>
        <dbReference type="ChEBI" id="CHEBI:30616"/>
    </ligand>
</feature>
<feature type="modified residue" description="Phosphothreonine" evidence="1">
    <location>
        <position position="291"/>
    </location>
</feature>
<feature type="sequence conflict" description="In Ref. 4; AK120969." evidence="6" ref="4">
    <original>N</original>
    <variation>D</variation>
    <location>
        <position position="253"/>
    </location>
</feature>
<feature type="sequence conflict" description="In Ref. 4; AK120969." evidence="6" ref="4">
    <original>S</original>
    <variation>G</variation>
    <location>
        <position position="394"/>
    </location>
</feature>
<feature type="sequence conflict" description="In Ref. 4; AK120969." evidence="6" ref="4">
    <original>F</original>
    <variation>L</variation>
    <location>
        <position position="450"/>
    </location>
</feature>
<accession>Q5Z754</accession>
<accession>A0A0P0WWF8</accession>
<proteinExistence type="evidence at transcript level"/>
<protein>
    <recommendedName>
        <fullName>Cyclin-dependent kinase F-1</fullName>
        <shortName>CDKF;1</shortName>
        <ecNumber>2.7.11.22</ecNumber>
        <ecNumber>2.7.11.23</ecNumber>
    </recommendedName>
</protein>
<dbReference type="EC" id="2.7.11.22"/>
<dbReference type="EC" id="2.7.11.23"/>
<dbReference type="EMBL" id="AP004784">
    <property type="protein sequence ID" value="BAD61885.1"/>
    <property type="molecule type" value="Genomic_DNA"/>
</dbReference>
<dbReference type="EMBL" id="AP008212">
    <property type="protein sequence ID" value="BAF19465.1"/>
    <property type="molecule type" value="Genomic_DNA"/>
</dbReference>
<dbReference type="EMBL" id="AP014962">
    <property type="protein sequence ID" value="BAS97580.1"/>
    <property type="molecule type" value="Genomic_DNA"/>
</dbReference>
<dbReference type="EMBL" id="AK120969">
    <property type="status" value="NOT_ANNOTATED_CDS"/>
    <property type="molecule type" value="mRNA"/>
</dbReference>
<dbReference type="RefSeq" id="XP_015644444.1">
    <property type="nucleotide sequence ID" value="XM_015788958.1"/>
</dbReference>
<dbReference type="SMR" id="Q5Z754"/>
<dbReference type="FunCoup" id="Q5Z754">
    <property type="interactions" value="2051"/>
</dbReference>
<dbReference type="STRING" id="39947.Q5Z754"/>
<dbReference type="iPTMnet" id="Q5Z754"/>
<dbReference type="PaxDb" id="39947-Q5Z754"/>
<dbReference type="EnsemblPlants" id="Os06t0334400-01">
    <property type="protein sequence ID" value="Os06t0334400-01"/>
    <property type="gene ID" value="Os06g0334400"/>
</dbReference>
<dbReference type="Gramene" id="Os06t0334400-01">
    <property type="protein sequence ID" value="Os06t0334400-01"/>
    <property type="gene ID" value="Os06g0334400"/>
</dbReference>
<dbReference type="KEGG" id="dosa:Os06g0334400"/>
<dbReference type="eggNOG" id="KOG0594">
    <property type="taxonomic scope" value="Eukaryota"/>
</dbReference>
<dbReference type="InParanoid" id="Q5Z754"/>
<dbReference type="OMA" id="WSIHTRR"/>
<dbReference type="OrthoDB" id="1732493at2759"/>
<dbReference type="Proteomes" id="UP000000763">
    <property type="component" value="Chromosome 6"/>
</dbReference>
<dbReference type="Proteomes" id="UP000059680">
    <property type="component" value="Chromosome 6"/>
</dbReference>
<dbReference type="ExpressionAtlas" id="Q5Z754">
    <property type="expression patterns" value="baseline and differential"/>
</dbReference>
<dbReference type="GO" id="GO:0005634">
    <property type="term" value="C:nucleus"/>
    <property type="evidence" value="ECO:0000318"/>
    <property type="project" value="GO_Central"/>
</dbReference>
<dbReference type="GO" id="GO:0005524">
    <property type="term" value="F:ATP binding"/>
    <property type="evidence" value="ECO:0007669"/>
    <property type="project" value="UniProtKB-KW"/>
</dbReference>
<dbReference type="GO" id="GO:0019912">
    <property type="term" value="F:cyclin-dependent protein kinase activating kinase activity"/>
    <property type="evidence" value="ECO:0000318"/>
    <property type="project" value="GO_Central"/>
</dbReference>
<dbReference type="GO" id="GO:0004693">
    <property type="term" value="F:cyclin-dependent protein serine/threonine kinase activity"/>
    <property type="evidence" value="ECO:0007669"/>
    <property type="project" value="UniProtKB-EC"/>
</dbReference>
<dbReference type="GO" id="GO:0106310">
    <property type="term" value="F:protein serine kinase activity"/>
    <property type="evidence" value="ECO:0007669"/>
    <property type="project" value="RHEA"/>
</dbReference>
<dbReference type="GO" id="GO:0004674">
    <property type="term" value="F:protein serine/threonine kinase activity"/>
    <property type="evidence" value="ECO:0000318"/>
    <property type="project" value="GO_Central"/>
</dbReference>
<dbReference type="GO" id="GO:0008353">
    <property type="term" value="F:RNA polymerase II CTD heptapeptide repeat kinase activity"/>
    <property type="evidence" value="ECO:0007669"/>
    <property type="project" value="UniProtKB-EC"/>
</dbReference>
<dbReference type="FunFam" id="1.10.510.10:FF:000799">
    <property type="entry name" value="Cyclin-dependent kinase F-1"/>
    <property type="match status" value="1"/>
</dbReference>
<dbReference type="FunFam" id="1.10.510.10:FF:000898">
    <property type="entry name" value="Cyclin-dependent kinase F-1"/>
    <property type="match status" value="1"/>
</dbReference>
<dbReference type="Gene3D" id="1.10.510.10">
    <property type="entry name" value="Transferase(Phosphotransferase) domain 1"/>
    <property type="match status" value="2"/>
</dbReference>
<dbReference type="InterPro" id="IPR050108">
    <property type="entry name" value="CDK"/>
</dbReference>
<dbReference type="InterPro" id="IPR011009">
    <property type="entry name" value="Kinase-like_dom_sf"/>
</dbReference>
<dbReference type="InterPro" id="IPR000719">
    <property type="entry name" value="Prot_kinase_dom"/>
</dbReference>
<dbReference type="InterPro" id="IPR008271">
    <property type="entry name" value="Ser/Thr_kinase_AS"/>
</dbReference>
<dbReference type="PANTHER" id="PTHR24056">
    <property type="entry name" value="CELL DIVISION PROTEIN KINASE"/>
    <property type="match status" value="1"/>
</dbReference>
<dbReference type="PANTHER" id="PTHR24056:SF171">
    <property type="entry name" value="CYCLIN-DEPENDENT KINASE 20"/>
    <property type="match status" value="1"/>
</dbReference>
<dbReference type="Pfam" id="PF00069">
    <property type="entry name" value="Pkinase"/>
    <property type="match status" value="2"/>
</dbReference>
<dbReference type="SMART" id="SM00220">
    <property type="entry name" value="S_TKc"/>
    <property type="match status" value="1"/>
</dbReference>
<dbReference type="SUPFAM" id="SSF56112">
    <property type="entry name" value="Protein kinase-like (PK-like)"/>
    <property type="match status" value="1"/>
</dbReference>
<dbReference type="PROSITE" id="PS50011">
    <property type="entry name" value="PROTEIN_KINASE_DOM"/>
    <property type="match status" value="1"/>
</dbReference>
<dbReference type="PROSITE" id="PS00108">
    <property type="entry name" value="PROTEIN_KINASE_ST"/>
    <property type="match status" value="1"/>
</dbReference>
<evidence type="ECO:0000250" key="1"/>
<evidence type="ECO:0000255" key="2">
    <source>
        <dbReference type="PROSITE-ProRule" id="PRU00159"/>
    </source>
</evidence>
<evidence type="ECO:0000255" key="3">
    <source>
        <dbReference type="PROSITE-ProRule" id="PRU10027"/>
    </source>
</evidence>
<evidence type="ECO:0000256" key="4">
    <source>
        <dbReference type="SAM" id="MobiDB-lite"/>
    </source>
</evidence>
<evidence type="ECO:0000269" key="5">
    <source>
    </source>
</evidence>
<evidence type="ECO:0000305" key="6"/>
<keyword id="KW-0067">ATP-binding</keyword>
<keyword id="KW-0418">Kinase</keyword>
<keyword id="KW-0547">Nucleotide-binding</keyword>
<keyword id="KW-0597">Phosphoprotein</keyword>
<keyword id="KW-1185">Reference proteome</keyword>
<keyword id="KW-0723">Serine/threonine-protein kinase</keyword>
<keyword id="KW-0808">Transferase</keyword>
<reference key="1">
    <citation type="journal article" date="2005" name="Nature">
        <title>The map-based sequence of the rice genome.</title>
        <authorList>
            <consortium name="International rice genome sequencing project (IRGSP)"/>
        </authorList>
    </citation>
    <scope>NUCLEOTIDE SEQUENCE [LARGE SCALE GENOMIC DNA]</scope>
    <source>
        <strain>cv. Nipponbare</strain>
    </source>
</reference>
<reference key="2">
    <citation type="journal article" date="2008" name="Nucleic Acids Res.">
        <title>The rice annotation project database (RAP-DB): 2008 update.</title>
        <authorList>
            <consortium name="The rice annotation project (RAP)"/>
        </authorList>
    </citation>
    <scope>GENOME REANNOTATION</scope>
    <source>
        <strain>cv. Nipponbare</strain>
    </source>
</reference>
<reference key="3">
    <citation type="journal article" date="2013" name="Rice">
        <title>Improvement of the Oryza sativa Nipponbare reference genome using next generation sequence and optical map data.</title>
        <authorList>
            <person name="Kawahara Y."/>
            <person name="de la Bastide M."/>
            <person name="Hamilton J.P."/>
            <person name="Kanamori H."/>
            <person name="McCombie W.R."/>
            <person name="Ouyang S."/>
            <person name="Schwartz D.C."/>
            <person name="Tanaka T."/>
            <person name="Wu J."/>
            <person name="Zhou S."/>
            <person name="Childs K.L."/>
            <person name="Davidson R.M."/>
            <person name="Lin H."/>
            <person name="Quesada-Ocampo L."/>
            <person name="Vaillancourt B."/>
            <person name="Sakai H."/>
            <person name="Lee S.S."/>
            <person name="Kim J."/>
            <person name="Numa H."/>
            <person name="Itoh T."/>
            <person name="Buell C.R."/>
            <person name="Matsumoto T."/>
        </authorList>
    </citation>
    <scope>GENOME REANNOTATION</scope>
    <source>
        <strain>cv. Nipponbare</strain>
    </source>
</reference>
<reference key="4">
    <citation type="journal article" date="2003" name="Science">
        <title>Collection, mapping, and annotation of over 28,000 cDNA clones from japonica rice.</title>
        <authorList>
            <consortium name="The rice full-length cDNA consortium"/>
        </authorList>
    </citation>
    <scope>NUCLEOTIDE SEQUENCE [LARGE SCALE MRNA]</scope>
    <source>
        <strain>cv. Nipponbare</strain>
    </source>
</reference>
<reference key="5">
    <citation type="journal article" date="2007" name="Plant Mol. Biol.">
        <title>Genome-wide identification and expression analysis of rice cell cycle genes.</title>
        <authorList>
            <person name="Guo J."/>
            <person name="Song J."/>
            <person name="Wang F."/>
            <person name="Zhang X.S."/>
        </authorList>
    </citation>
    <scope>INDUCTION</scope>
    <scope>GENE FAMILY</scope>
</reference>
<gene>
    <name type="primary">CDKF-1</name>
    <name type="ordered locus">Os06g0334400</name>
    <name type="ordered locus">LOC_Os06g22820</name>
    <name type="ORF">OSJNBa0012F14.17</name>
</gene>
<name>CDKF1_ORYSJ</name>
<comment type="catalytic activity">
    <reaction>
        <text>L-seryl-[protein] + ATP = O-phospho-L-seryl-[protein] + ADP + H(+)</text>
        <dbReference type="Rhea" id="RHEA:17989"/>
        <dbReference type="Rhea" id="RHEA-COMP:9863"/>
        <dbReference type="Rhea" id="RHEA-COMP:11604"/>
        <dbReference type="ChEBI" id="CHEBI:15378"/>
        <dbReference type="ChEBI" id="CHEBI:29999"/>
        <dbReference type="ChEBI" id="CHEBI:30616"/>
        <dbReference type="ChEBI" id="CHEBI:83421"/>
        <dbReference type="ChEBI" id="CHEBI:456216"/>
        <dbReference type="EC" id="2.7.11.22"/>
    </reaction>
</comment>
<comment type="catalytic activity">
    <reaction>
        <text>L-threonyl-[protein] + ATP = O-phospho-L-threonyl-[protein] + ADP + H(+)</text>
        <dbReference type="Rhea" id="RHEA:46608"/>
        <dbReference type="Rhea" id="RHEA-COMP:11060"/>
        <dbReference type="Rhea" id="RHEA-COMP:11605"/>
        <dbReference type="ChEBI" id="CHEBI:15378"/>
        <dbReference type="ChEBI" id="CHEBI:30013"/>
        <dbReference type="ChEBI" id="CHEBI:30616"/>
        <dbReference type="ChEBI" id="CHEBI:61977"/>
        <dbReference type="ChEBI" id="CHEBI:456216"/>
        <dbReference type="EC" id="2.7.11.22"/>
    </reaction>
</comment>
<comment type="catalytic activity">
    <reaction>
        <text>[DNA-directed RNA polymerase] + ATP = phospho-[DNA-directed RNA polymerase] + ADP + H(+)</text>
        <dbReference type="Rhea" id="RHEA:10216"/>
        <dbReference type="Rhea" id="RHEA-COMP:11321"/>
        <dbReference type="Rhea" id="RHEA-COMP:11322"/>
        <dbReference type="ChEBI" id="CHEBI:15378"/>
        <dbReference type="ChEBI" id="CHEBI:30616"/>
        <dbReference type="ChEBI" id="CHEBI:43176"/>
        <dbReference type="ChEBI" id="CHEBI:68546"/>
        <dbReference type="ChEBI" id="CHEBI:456216"/>
        <dbReference type="EC" id="2.7.11.23"/>
    </reaction>
</comment>
<comment type="induction">
    <text evidence="5">By auxin. Down-regulated by cytokinin.</text>
</comment>
<comment type="similarity">
    <text evidence="6">Belongs to the protein kinase superfamily. CMGC Ser/Thr protein kinase family. CDC2/CDKX subfamily.</text>
</comment>
<organism>
    <name type="scientific">Oryza sativa subsp. japonica</name>
    <name type="common">Rice</name>
    <dbReference type="NCBI Taxonomy" id="39947"/>
    <lineage>
        <taxon>Eukaryota</taxon>
        <taxon>Viridiplantae</taxon>
        <taxon>Streptophyta</taxon>
        <taxon>Embryophyta</taxon>
        <taxon>Tracheophyta</taxon>
        <taxon>Spermatophyta</taxon>
        <taxon>Magnoliopsida</taxon>
        <taxon>Liliopsida</taxon>
        <taxon>Poales</taxon>
        <taxon>Poaceae</taxon>
        <taxon>BOP clade</taxon>
        <taxon>Oryzoideae</taxon>
        <taxon>Oryzeae</taxon>
        <taxon>Oryzinae</taxon>
        <taxon>Oryza</taxon>
        <taxon>Oryza sativa</taxon>
    </lineage>
</organism>
<sequence>MAIGGGGGGGSWSIHGRPDVTSRYEVLGRAGSGAYADVYRGRRRSDGAPVALKEVHDAVSARREADALLAAAPSRHVVALLDHFPGGDHDDDVLVLEWLPLDLSAVVRAAAAARPSALPAAQRKRWMLQVLEGVAACHSAGVVHRDLKPANLLISEDGVLKVADLGQARILQETGTYQGMHPYEQSSGVEPWVSQQRAVLHGVKENHPSHDSETQTGQEPERLTAADYLHEMDQLRAKSTHGDVDKMSLQDGNASCLATCSTADIDDDPFRASYSYDAEEGMLEEESGAFTSCVGTRWFRAPELLYGSTNYGQEVDLWSLGCILAELFNLEPIFPGTSDIDQIGRIISVLGNITEETFPGCSNLPDYNKIFFNKVEKPIGLEACLPDRSASEVSIIKRLLCYDPTKRASAADLLNDPYFAEEPLPVPIEGLQVPESKDEDDDSTEEWANFRGGDSDSDFDEFGSMDVTKTDKGFSIRFS</sequence>